<gene>
    <name type="primary">SOD3</name>
</gene>
<comment type="function">
    <text evidence="1">Protect the extracellular space from toxic effect of reactive oxygen intermediates by converting superoxide radicals into hydrogen peroxide and oxygen.</text>
</comment>
<comment type="catalytic activity">
    <reaction>
        <text>2 superoxide + 2 H(+) = H2O2 + O2</text>
        <dbReference type="Rhea" id="RHEA:20696"/>
        <dbReference type="ChEBI" id="CHEBI:15378"/>
        <dbReference type="ChEBI" id="CHEBI:15379"/>
        <dbReference type="ChEBI" id="CHEBI:16240"/>
        <dbReference type="ChEBI" id="CHEBI:18421"/>
        <dbReference type="EC" id="1.15.1.1"/>
    </reaction>
</comment>
<comment type="cofactor">
    <cofactor evidence="1">
        <name>Cu cation</name>
        <dbReference type="ChEBI" id="CHEBI:23378"/>
    </cofactor>
    <text evidence="1">Binds 1 copper ion per subunit.</text>
</comment>
<comment type="cofactor">
    <cofactor evidence="1">
        <name>Zn(2+)</name>
        <dbReference type="ChEBI" id="CHEBI:29105"/>
    </cofactor>
    <text evidence="1">Binds 1 zinc ion per subunit.</text>
</comment>
<comment type="subunit">
    <text evidence="3">Homotetramer. Directly interacts with ATP7A; this interaction is copper-dependent and is required for SOD3 activity.</text>
</comment>
<comment type="subcellular location">
    <subcellularLocation>
        <location>Secreted</location>
        <location>Extracellular space</location>
    </subcellularLocation>
    <subcellularLocation>
        <location evidence="2">Golgi apparatus</location>
        <location evidence="2">trans-Golgi network</location>
    </subcellularLocation>
</comment>
<comment type="similarity">
    <text evidence="6">Belongs to the Cu-Zn superoxide dismutase family.</text>
</comment>
<organism>
    <name type="scientific">Oryctolagus cuniculus</name>
    <name type="common">Rabbit</name>
    <dbReference type="NCBI Taxonomy" id="9986"/>
    <lineage>
        <taxon>Eukaryota</taxon>
        <taxon>Metazoa</taxon>
        <taxon>Chordata</taxon>
        <taxon>Craniata</taxon>
        <taxon>Vertebrata</taxon>
        <taxon>Euteleostomi</taxon>
        <taxon>Mammalia</taxon>
        <taxon>Eutheria</taxon>
        <taxon>Euarchontoglires</taxon>
        <taxon>Glires</taxon>
        <taxon>Lagomorpha</taxon>
        <taxon>Leporidae</taxon>
        <taxon>Oryctolagus</taxon>
    </lineage>
</organism>
<dbReference type="EC" id="1.15.1.1"/>
<dbReference type="EMBL" id="Z67878">
    <property type="protein sequence ID" value="CAA91785.1"/>
    <property type="molecule type" value="mRNA"/>
</dbReference>
<dbReference type="EMBL" id="Y13339">
    <property type="protein sequence ID" value="CAA73783.1"/>
    <property type="molecule type" value="Genomic_DNA"/>
</dbReference>
<dbReference type="EMBL" id="AJ007044">
    <property type="protein sequence ID" value="CAA07431.1"/>
    <property type="molecule type" value="Genomic_DNA"/>
</dbReference>
<dbReference type="EMBL" id="X78139">
    <property type="protein sequence ID" value="CAA55018.1"/>
    <property type="molecule type" value="mRNA"/>
</dbReference>
<dbReference type="RefSeq" id="NP_001076101.1">
    <property type="nucleotide sequence ID" value="NM_001082632.1"/>
</dbReference>
<dbReference type="SMR" id="P41975"/>
<dbReference type="FunCoup" id="P41975">
    <property type="interactions" value="9"/>
</dbReference>
<dbReference type="STRING" id="9986.ENSOCUP00000006450"/>
<dbReference type="GlyCosmos" id="P41975">
    <property type="glycosylation" value="1 site, No reported glycans"/>
</dbReference>
<dbReference type="PaxDb" id="9986-ENSOCUP00000006450"/>
<dbReference type="GeneID" id="100009320"/>
<dbReference type="KEGG" id="ocu:100009320"/>
<dbReference type="CTD" id="6649"/>
<dbReference type="eggNOG" id="KOG0441">
    <property type="taxonomic scope" value="Eukaryota"/>
</dbReference>
<dbReference type="HOGENOM" id="CLU_056632_3_1_1"/>
<dbReference type="InParanoid" id="P41975"/>
<dbReference type="OMA" id="DGSLWKY"/>
<dbReference type="OrthoDB" id="666972at2759"/>
<dbReference type="TreeFam" id="TF105133"/>
<dbReference type="BRENDA" id="1.15.1.1">
    <property type="organism ID" value="1749"/>
</dbReference>
<dbReference type="Proteomes" id="UP000001811">
    <property type="component" value="Unplaced"/>
</dbReference>
<dbReference type="GO" id="GO:0062023">
    <property type="term" value="C:collagen-containing extracellular matrix"/>
    <property type="evidence" value="ECO:0000250"/>
    <property type="project" value="UniProtKB"/>
</dbReference>
<dbReference type="GO" id="GO:0005576">
    <property type="term" value="C:extracellular region"/>
    <property type="evidence" value="ECO:0007669"/>
    <property type="project" value="UniProtKB-SubCell"/>
</dbReference>
<dbReference type="GO" id="GO:0005794">
    <property type="term" value="C:Golgi apparatus"/>
    <property type="evidence" value="ECO:0007669"/>
    <property type="project" value="UniProtKB-SubCell"/>
</dbReference>
<dbReference type="GO" id="GO:0005507">
    <property type="term" value="F:copper ion binding"/>
    <property type="evidence" value="ECO:0007669"/>
    <property type="project" value="InterPro"/>
</dbReference>
<dbReference type="GO" id="GO:0004784">
    <property type="term" value="F:superoxide dismutase activity"/>
    <property type="evidence" value="ECO:0007669"/>
    <property type="project" value="UniProtKB-EC"/>
</dbReference>
<dbReference type="CDD" id="cd00305">
    <property type="entry name" value="Cu-Zn_Superoxide_Dismutase"/>
    <property type="match status" value="1"/>
</dbReference>
<dbReference type="FunFam" id="2.60.40.200:FF:000008">
    <property type="entry name" value="Superoxide dismutase [Cu-Zn]"/>
    <property type="match status" value="1"/>
</dbReference>
<dbReference type="Gene3D" id="2.60.40.200">
    <property type="entry name" value="Superoxide dismutase, copper/zinc binding domain"/>
    <property type="match status" value="1"/>
</dbReference>
<dbReference type="InterPro" id="IPR036423">
    <property type="entry name" value="SOD-like_Cu/Zn_dom_sf"/>
</dbReference>
<dbReference type="InterPro" id="IPR024134">
    <property type="entry name" value="SOD_Cu/Zn_/chaperone"/>
</dbReference>
<dbReference type="InterPro" id="IPR018152">
    <property type="entry name" value="SOD_Cu/Zn_BS"/>
</dbReference>
<dbReference type="InterPro" id="IPR001424">
    <property type="entry name" value="SOD_Cu_Zn_dom"/>
</dbReference>
<dbReference type="PANTHER" id="PTHR10003">
    <property type="entry name" value="SUPEROXIDE DISMUTASE CU-ZN -RELATED"/>
    <property type="match status" value="1"/>
</dbReference>
<dbReference type="Pfam" id="PF00080">
    <property type="entry name" value="Sod_Cu"/>
    <property type="match status" value="1"/>
</dbReference>
<dbReference type="PRINTS" id="PR00068">
    <property type="entry name" value="CUZNDISMTASE"/>
</dbReference>
<dbReference type="SUPFAM" id="SSF49329">
    <property type="entry name" value="Cu,Zn superoxide dismutase-like"/>
    <property type="match status" value="1"/>
</dbReference>
<dbReference type="PROSITE" id="PS00087">
    <property type="entry name" value="SOD_CU_ZN_1"/>
    <property type="match status" value="1"/>
</dbReference>
<dbReference type="PROSITE" id="PS00332">
    <property type="entry name" value="SOD_CU_ZN_2"/>
    <property type="match status" value="1"/>
</dbReference>
<protein>
    <recommendedName>
        <fullName>Extracellular superoxide dismutase [Cu-Zn]</fullName>
        <shortName>EC-SOD</shortName>
        <ecNumber>1.15.1.1</ecNumber>
    </recommendedName>
</protein>
<sequence length="244" mass="25688">MLALVCSCLLLAALPADTWSGPAAVELGSDTVEQIRDTHAKVTEIWQALTQQRAAQGEPAGALHAVCRVQPSATLDAAQPRVSGLVVFRQLGPGAQLEAFFDLEGFPVEANLSSRAIHVHQFGDLSQGCDSTGAHYNPLAVQHPQHPGDFGNFAVRDGRLWKYRSGLAASLAGPHSIVGRAVVVHAGEDDLGRGGNAASVENGNAGPRLACCVVGASGPAPWARQAQEHAERKKRRRESECKAA</sequence>
<proteinExistence type="evidence at transcript level"/>
<reference key="1">
    <citation type="submission" date="1995-11" db="EMBL/GenBank/DDBJ databases">
        <authorList>
            <person name="Laukkanen M.O."/>
            <person name="Aittomaki S.J."/>
            <person name="Hiltunen T.P."/>
            <person name="Yla-Herttuala S."/>
        </authorList>
    </citation>
    <scope>NUCLEOTIDE SEQUENCE</scope>
    <source>
        <strain>New Zealand white</strain>
    </source>
</reference>
<reference key="2">
    <citation type="submission" date="1997-05" db="EMBL/GenBank/DDBJ databases">
        <authorList>
            <person name="Laukkanen M.O."/>
            <person name="Hiltunen M.O."/>
            <person name="Aittomaki S."/>
            <person name="Janne J."/>
            <person name="Yla-Herttuala S."/>
        </authorList>
    </citation>
    <scope>NUCLEOTIDE SEQUENCE</scope>
    <source>
        <strain>New Zealand white</strain>
        <tissue>Heart</tissue>
    </source>
</reference>
<reference key="3">
    <citation type="submission" date="1998-06" db="EMBL/GenBank/DDBJ databases">
        <title>Cloning and characterization of rabbit extracellular superoxide dismutase.</title>
        <authorList>
            <person name="Laukkanen M.O."/>
            <person name="Aittomaeki S."/>
            <person name="Mannermaa S."/>
            <person name="Hiltunen M.O."/>
            <person name="Yla-Herttuala S."/>
        </authorList>
    </citation>
    <scope>NUCLEOTIDE SEQUENCE</scope>
</reference>
<reference key="4">
    <citation type="submission" date="1994-03" db="EMBL/GenBank/DDBJ databases">
        <authorList>
            <person name="Hiltunen T.P."/>
            <person name="Nikkari T."/>
            <person name="Yla-Herttuala S."/>
        </authorList>
    </citation>
    <scope>NUCLEOTIDE SEQUENCE OF 43-155</scope>
    <source>
        <strain>New Zealand white</strain>
        <tissue>Aorta</tissue>
    </source>
</reference>
<keyword id="KW-0049">Antioxidant</keyword>
<keyword id="KW-0186">Copper</keyword>
<keyword id="KW-1015">Disulfide bond</keyword>
<keyword id="KW-0325">Glycoprotein</keyword>
<keyword id="KW-0333">Golgi apparatus</keyword>
<keyword id="KW-0479">Metal-binding</keyword>
<keyword id="KW-0560">Oxidoreductase</keyword>
<keyword id="KW-1185">Reference proteome</keyword>
<keyword id="KW-0964">Secreted</keyword>
<keyword id="KW-0732">Signal</keyword>
<keyword id="KW-0862">Zinc</keyword>
<evidence type="ECO:0000250" key="1"/>
<evidence type="ECO:0000250" key="2">
    <source>
        <dbReference type="UniProtKB" id="O09164"/>
    </source>
</evidence>
<evidence type="ECO:0000250" key="3">
    <source>
        <dbReference type="UniProtKB" id="P08294"/>
    </source>
</evidence>
<evidence type="ECO:0000255" key="4"/>
<evidence type="ECO:0000256" key="5">
    <source>
        <dbReference type="SAM" id="MobiDB-lite"/>
    </source>
</evidence>
<evidence type="ECO:0000305" key="6"/>
<feature type="signal peptide" evidence="1">
    <location>
        <begin position="1"/>
        <end position="18"/>
    </location>
</feature>
<feature type="chain" id="PRO_0000032858" description="Extracellular superoxide dismutase [Cu-Zn]">
    <location>
        <begin position="19"/>
        <end position="244"/>
    </location>
</feature>
<feature type="region of interest" description="Disordered" evidence="5">
    <location>
        <begin position="221"/>
        <end position="244"/>
    </location>
</feature>
<feature type="compositionally biased region" description="Basic and acidic residues" evidence="5">
    <location>
        <begin position="226"/>
        <end position="244"/>
    </location>
</feature>
<feature type="binding site" evidence="1">
    <location>
        <position position="118"/>
    </location>
    <ligand>
        <name>Cu cation</name>
        <dbReference type="ChEBI" id="CHEBI:23378"/>
        <note>catalytic</note>
    </ligand>
</feature>
<feature type="binding site" evidence="1">
    <location>
        <position position="120"/>
    </location>
    <ligand>
        <name>Cu cation</name>
        <dbReference type="ChEBI" id="CHEBI:23378"/>
        <note>catalytic</note>
    </ligand>
</feature>
<feature type="binding site" evidence="1">
    <location>
        <position position="135"/>
    </location>
    <ligand>
        <name>Cu cation</name>
        <dbReference type="ChEBI" id="CHEBI:23378"/>
        <note>catalytic</note>
    </ligand>
</feature>
<feature type="binding site" evidence="1">
    <location>
        <position position="135"/>
    </location>
    <ligand>
        <name>Zn(2+)</name>
        <dbReference type="ChEBI" id="CHEBI:29105"/>
        <note>structural</note>
    </ligand>
</feature>
<feature type="binding site" evidence="1">
    <location>
        <position position="143"/>
    </location>
    <ligand>
        <name>Zn(2+)</name>
        <dbReference type="ChEBI" id="CHEBI:29105"/>
        <note>structural</note>
    </ligand>
</feature>
<feature type="binding site" evidence="1">
    <location>
        <position position="146"/>
    </location>
    <ligand>
        <name>Zn(2+)</name>
        <dbReference type="ChEBI" id="CHEBI:29105"/>
        <note>structural</note>
    </ligand>
</feature>
<feature type="binding site" evidence="1">
    <location>
        <position position="149"/>
    </location>
    <ligand>
        <name>Zn(2+)</name>
        <dbReference type="ChEBI" id="CHEBI:29105"/>
        <note>structural</note>
    </ligand>
</feature>
<feature type="binding site" evidence="1">
    <location>
        <position position="185"/>
    </location>
    <ligand>
        <name>Cu cation</name>
        <dbReference type="ChEBI" id="CHEBI:23378"/>
        <note>catalytic</note>
    </ligand>
</feature>
<feature type="glycosylation site" description="N-linked (GlcNAc...) asparagine" evidence="4">
    <location>
        <position position="111"/>
    </location>
</feature>
<feature type="disulfide bond" evidence="1">
    <location>
        <begin position="67"/>
        <end position="212"/>
    </location>
</feature>
<feature type="disulfide bond" evidence="1">
    <location>
        <begin position="129"/>
        <end position="211"/>
    </location>
</feature>
<feature type="sequence conflict" description="In Ref. 4; CAA55018." evidence="6" ref="4">
    <original>R</original>
    <variation>W</variation>
    <location>
        <position position="53"/>
    </location>
</feature>
<accession>P41975</accession>
<name>SODE_RABIT</name>